<comment type="function">
    <text evidence="1">Responsible for the transport of sucrose into the cell, with the concomitant uptake of protons (symport system). May also transport other glucosides (By similarity).</text>
</comment>
<comment type="pathway">
    <text>Glycan biosynthesis; sucrose metabolism.</text>
</comment>
<comment type="subunit">
    <text evidence="1">Homodimer.</text>
</comment>
<comment type="subcellular location">
    <subcellularLocation>
        <location evidence="3">Cell membrane</location>
        <topology evidence="3">Multi-pass membrane protein</topology>
    </subcellularLocation>
</comment>
<comment type="similarity">
    <text evidence="3">Belongs to the glycoside-pentoside-hexuronide (GPH) cation symporter transporter (TC 2.A.2.4) family.</text>
</comment>
<comment type="sequence caution" evidence="3">
    <conflict type="erroneous gene model prediction">
        <sequence resource="EMBL-CDS" id="EEC66911"/>
    </conflict>
</comment>
<feature type="chain" id="PRO_0000398190" description="Sucrose transport protein SUT3">
    <location>
        <begin position="1"/>
        <end position="506"/>
    </location>
</feature>
<feature type="topological domain" description="Cytoplasmic" evidence="2">
    <location>
        <begin position="1"/>
        <end position="20"/>
    </location>
</feature>
<feature type="transmembrane region" description="Helical" evidence="2">
    <location>
        <begin position="21"/>
        <end position="41"/>
    </location>
</feature>
<feature type="topological domain" description="Extracellular" evidence="2">
    <location>
        <begin position="42"/>
        <end position="54"/>
    </location>
</feature>
<feature type="transmembrane region" description="Helical" evidence="2">
    <location>
        <begin position="55"/>
        <end position="75"/>
    </location>
</feature>
<feature type="topological domain" description="Cytoplasmic" evidence="2">
    <location>
        <begin position="76"/>
        <end position="94"/>
    </location>
</feature>
<feature type="transmembrane region" description="Helical" evidence="2">
    <location>
        <begin position="95"/>
        <end position="115"/>
    </location>
</feature>
<feature type="topological domain" description="Extracellular" evidence="2">
    <location>
        <begin position="116"/>
        <end position="135"/>
    </location>
</feature>
<feature type="transmembrane region" description="Helical" evidence="2">
    <location>
        <begin position="136"/>
        <end position="156"/>
    </location>
</feature>
<feature type="topological domain" description="Cytoplasmic" evidence="2">
    <location>
        <begin position="157"/>
        <end position="171"/>
    </location>
</feature>
<feature type="transmembrane region" description="Helical" evidence="2">
    <location>
        <begin position="172"/>
        <end position="192"/>
    </location>
</feature>
<feature type="topological domain" description="Extracellular" evidence="2">
    <location>
        <begin position="193"/>
        <end position="220"/>
    </location>
</feature>
<feature type="transmembrane region" description="Helical" evidence="2">
    <location>
        <begin position="221"/>
        <end position="241"/>
    </location>
</feature>
<feature type="topological domain" description="Cytoplasmic" evidence="2">
    <location>
        <begin position="242"/>
        <end position="275"/>
    </location>
</feature>
<feature type="transmembrane region" description="Helical" evidence="2">
    <location>
        <begin position="276"/>
        <end position="296"/>
    </location>
</feature>
<feature type="topological domain" description="Extracellular" evidence="2">
    <location>
        <begin position="297"/>
        <end position="327"/>
    </location>
</feature>
<feature type="transmembrane region" description="Helical" evidence="2">
    <location>
        <begin position="328"/>
        <end position="348"/>
    </location>
</feature>
<feature type="topological domain" description="Cytoplasmic" evidence="2">
    <location>
        <begin position="349"/>
        <end position="355"/>
    </location>
</feature>
<feature type="transmembrane region" description="Helical" evidence="2">
    <location>
        <begin position="356"/>
        <end position="376"/>
    </location>
</feature>
<feature type="topological domain" description="Extracellular" evidence="2">
    <location>
        <begin position="377"/>
        <end position="404"/>
    </location>
</feature>
<feature type="transmembrane region" description="Helical" evidence="2">
    <location>
        <begin position="405"/>
        <end position="425"/>
    </location>
</feature>
<feature type="topological domain" description="Cytoplasmic" evidence="2">
    <location>
        <begin position="426"/>
        <end position="441"/>
    </location>
</feature>
<feature type="transmembrane region" description="Helical" evidence="2">
    <location>
        <begin position="442"/>
        <end position="462"/>
    </location>
</feature>
<feature type="topological domain" description="Extracellular" evidence="2">
    <location>
        <begin position="463"/>
        <end position="470"/>
    </location>
</feature>
<feature type="transmembrane region" description="Helical" evidence="2">
    <location>
        <begin position="471"/>
        <end position="491"/>
    </location>
</feature>
<feature type="topological domain" description="Cytoplasmic" evidence="2">
    <location>
        <begin position="492"/>
        <end position="506"/>
    </location>
</feature>
<evidence type="ECO:0000250" key="1"/>
<evidence type="ECO:0000255" key="2"/>
<evidence type="ECO:0000305" key="3"/>
<sequence>MAVDMELDGGGDGKGKAPPQISLSGLFLACMVAGGVQYGWALQLSLLTPYIQTLGIPHALTSVMWLCGPIAGLIVQPCVGLYSDKCTSSLGRRRPFILTGCIIICISVIVIGFSSDIGYALGDATEDCKVYRGPRYHAAAAFILGFWLLDFSNNTVQGPARALMADLSGRHGPSAANAIFCSWMALGNILGYSSGSTNDWHKWFPFLMTRACCEACANLKAAFLVAVVFLGLSTAVTMVFAREVALDPVAAAKRNEGEASGPLAVFKGMKNLPVGMPSVLIVTGLTWLSWFPFILFDTDWMGREIYHGRPDGSPAEVTAFQEGVRQGAFGLLLNSIVLGISSFLIEPMCRRLGARAVWVMSSAVVCVAMAAVSVLSAWSLGDFGGSVQDAARAPAEEGGVRASALALFVFLGLPFAVLCSVPFAVTAQLTASRGGGQGLCTGVLNISIVVPQMAIALGAGPWDELFGEGNIPAFAMASVFAAAAAAAGVVLLPKVSVRSVSMAGGH</sequence>
<keyword id="KW-1003">Cell membrane</keyword>
<keyword id="KW-0472">Membrane</keyword>
<keyword id="KW-1185">Reference proteome</keyword>
<keyword id="KW-0762">Sugar transport</keyword>
<keyword id="KW-0769">Symport</keyword>
<keyword id="KW-0812">Transmembrane</keyword>
<keyword id="KW-1133">Transmembrane helix</keyword>
<keyword id="KW-0813">Transport</keyword>
<organism>
    <name type="scientific">Oryza sativa subsp. indica</name>
    <name type="common">Rice</name>
    <dbReference type="NCBI Taxonomy" id="39946"/>
    <lineage>
        <taxon>Eukaryota</taxon>
        <taxon>Viridiplantae</taxon>
        <taxon>Streptophyta</taxon>
        <taxon>Embryophyta</taxon>
        <taxon>Tracheophyta</taxon>
        <taxon>Spermatophyta</taxon>
        <taxon>Magnoliopsida</taxon>
        <taxon>Liliopsida</taxon>
        <taxon>Poales</taxon>
        <taxon>Poaceae</taxon>
        <taxon>BOP clade</taxon>
        <taxon>Oryzoideae</taxon>
        <taxon>Oryzeae</taxon>
        <taxon>Oryzinae</taxon>
        <taxon>Oryza</taxon>
        <taxon>Oryza sativa</taxon>
    </lineage>
</organism>
<protein>
    <recommendedName>
        <fullName>Sucrose transport protein SUT3</fullName>
    </recommendedName>
    <alternativeName>
        <fullName>Sucrose permease 3</fullName>
    </alternativeName>
    <alternativeName>
        <fullName>Sucrose transporter 3</fullName>
        <shortName>OsSUT3</shortName>
    </alternativeName>
    <alternativeName>
        <fullName>Sucrose-proton symporter 3</fullName>
    </alternativeName>
</protein>
<reference key="1">
    <citation type="journal article" date="2003" name="Plant Cell Physiol.">
        <title>The sucrose transporter gene family in rice.</title>
        <authorList>
            <person name="Aoki N."/>
            <person name="Hirose T."/>
            <person name="Scofield G.N."/>
            <person name="Whitfeld P.R."/>
            <person name="Furbank R.T."/>
        </authorList>
    </citation>
    <scope>NUCLEOTIDE SEQUENCE [GENOMIC DNA]</scope>
    <source>
        <strain>cv. IR36</strain>
    </source>
</reference>
<reference key="2">
    <citation type="journal article" date="2005" name="PLoS Biol.">
        <title>The genomes of Oryza sativa: a history of duplications.</title>
        <authorList>
            <person name="Yu J."/>
            <person name="Wang J."/>
            <person name="Lin W."/>
            <person name="Li S."/>
            <person name="Li H."/>
            <person name="Zhou J."/>
            <person name="Ni P."/>
            <person name="Dong W."/>
            <person name="Hu S."/>
            <person name="Zeng C."/>
            <person name="Zhang J."/>
            <person name="Zhang Y."/>
            <person name="Li R."/>
            <person name="Xu Z."/>
            <person name="Li S."/>
            <person name="Li X."/>
            <person name="Zheng H."/>
            <person name="Cong L."/>
            <person name="Lin L."/>
            <person name="Yin J."/>
            <person name="Geng J."/>
            <person name="Li G."/>
            <person name="Shi J."/>
            <person name="Liu J."/>
            <person name="Lv H."/>
            <person name="Li J."/>
            <person name="Wang J."/>
            <person name="Deng Y."/>
            <person name="Ran L."/>
            <person name="Shi X."/>
            <person name="Wang X."/>
            <person name="Wu Q."/>
            <person name="Li C."/>
            <person name="Ren X."/>
            <person name="Wang J."/>
            <person name="Wang X."/>
            <person name="Li D."/>
            <person name="Liu D."/>
            <person name="Zhang X."/>
            <person name="Ji Z."/>
            <person name="Zhao W."/>
            <person name="Sun Y."/>
            <person name="Zhang Z."/>
            <person name="Bao J."/>
            <person name="Han Y."/>
            <person name="Dong L."/>
            <person name="Ji J."/>
            <person name="Chen P."/>
            <person name="Wu S."/>
            <person name="Liu J."/>
            <person name="Xiao Y."/>
            <person name="Bu D."/>
            <person name="Tan J."/>
            <person name="Yang L."/>
            <person name="Ye C."/>
            <person name="Zhang J."/>
            <person name="Xu J."/>
            <person name="Zhou Y."/>
            <person name="Yu Y."/>
            <person name="Zhang B."/>
            <person name="Zhuang S."/>
            <person name="Wei H."/>
            <person name="Liu B."/>
            <person name="Lei M."/>
            <person name="Yu H."/>
            <person name="Li Y."/>
            <person name="Xu H."/>
            <person name="Wei S."/>
            <person name="He X."/>
            <person name="Fang L."/>
            <person name="Zhang Z."/>
            <person name="Zhang Y."/>
            <person name="Huang X."/>
            <person name="Su Z."/>
            <person name="Tong W."/>
            <person name="Li J."/>
            <person name="Tong Z."/>
            <person name="Li S."/>
            <person name="Ye J."/>
            <person name="Wang L."/>
            <person name="Fang L."/>
            <person name="Lei T."/>
            <person name="Chen C.-S."/>
            <person name="Chen H.-C."/>
            <person name="Xu Z."/>
            <person name="Li H."/>
            <person name="Huang H."/>
            <person name="Zhang F."/>
            <person name="Xu H."/>
            <person name="Li N."/>
            <person name="Zhao C."/>
            <person name="Li S."/>
            <person name="Dong L."/>
            <person name="Huang Y."/>
            <person name="Li L."/>
            <person name="Xi Y."/>
            <person name="Qi Q."/>
            <person name="Li W."/>
            <person name="Zhang B."/>
            <person name="Hu W."/>
            <person name="Zhang Y."/>
            <person name="Tian X."/>
            <person name="Jiao Y."/>
            <person name="Liang X."/>
            <person name="Jin J."/>
            <person name="Gao L."/>
            <person name="Zheng W."/>
            <person name="Hao B."/>
            <person name="Liu S.-M."/>
            <person name="Wang W."/>
            <person name="Yuan L."/>
            <person name="Cao M."/>
            <person name="McDermott J."/>
            <person name="Samudrala R."/>
            <person name="Wang J."/>
            <person name="Wong G.K.-S."/>
            <person name="Yang H."/>
        </authorList>
    </citation>
    <scope>NUCLEOTIDE SEQUENCE [LARGE SCALE GENOMIC DNA]</scope>
    <source>
        <strain>cv. 93-11</strain>
    </source>
</reference>
<proteinExistence type="inferred from homology"/>
<accession>Q944W2</accession>
<accession>B8BGQ9</accession>
<name>SUT3_ORYSI</name>
<gene>
    <name type="primary">SUT3</name>
    <name type="ORF">OsI_33504</name>
</gene>
<dbReference type="EMBL" id="AF419298">
    <property type="protein sequence ID" value="AAL14982.1"/>
    <property type="molecule type" value="Genomic_DNA"/>
</dbReference>
<dbReference type="EMBL" id="CM000135">
    <property type="protein sequence ID" value="EEC66911.1"/>
    <property type="status" value="ALT_SEQ"/>
    <property type="molecule type" value="Genomic_DNA"/>
</dbReference>
<dbReference type="SMR" id="Q944W2"/>
<dbReference type="STRING" id="39946.Q944W2"/>
<dbReference type="UniPathway" id="UPA00238"/>
<dbReference type="Proteomes" id="UP000007015">
    <property type="component" value="Chromosome 10"/>
</dbReference>
<dbReference type="GO" id="GO:0005886">
    <property type="term" value="C:plasma membrane"/>
    <property type="evidence" value="ECO:0007669"/>
    <property type="project" value="UniProtKB-SubCell"/>
</dbReference>
<dbReference type="GO" id="GO:0008506">
    <property type="term" value="F:sucrose:proton symporter activity"/>
    <property type="evidence" value="ECO:0007669"/>
    <property type="project" value="TreeGrafter"/>
</dbReference>
<dbReference type="GO" id="GO:0005985">
    <property type="term" value="P:sucrose metabolic process"/>
    <property type="evidence" value="ECO:0007669"/>
    <property type="project" value="UniProtKB-UniPathway"/>
</dbReference>
<dbReference type="CDD" id="cd17313">
    <property type="entry name" value="MFS_SLC45_SUC"/>
    <property type="match status" value="1"/>
</dbReference>
<dbReference type="FunFam" id="1.20.1250.20:FF:000169">
    <property type="entry name" value="Sucrose transport protein SUC3"/>
    <property type="match status" value="1"/>
</dbReference>
<dbReference type="Gene3D" id="1.20.1250.20">
    <property type="entry name" value="MFS general substrate transporter like domains"/>
    <property type="match status" value="1"/>
</dbReference>
<dbReference type="InterPro" id="IPR036259">
    <property type="entry name" value="MFS_trans_sf"/>
</dbReference>
<dbReference type="PANTHER" id="PTHR19432:SF39">
    <property type="entry name" value="SUCROSE TRANSPORT PROTEIN SUT3"/>
    <property type="match status" value="1"/>
</dbReference>
<dbReference type="PANTHER" id="PTHR19432">
    <property type="entry name" value="SUGAR TRANSPORTER"/>
    <property type="match status" value="1"/>
</dbReference>
<dbReference type="Pfam" id="PF13347">
    <property type="entry name" value="MFS_2"/>
    <property type="match status" value="1"/>
</dbReference>
<dbReference type="SUPFAM" id="SSF103473">
    <property type="entry name" value="MFS general substrate transporter"/>
    <property type="match status" value="1"/>
</dbReference>